<accession>P03345</accession>
<accession>Q85589</accession>
<evidence type="ECO:0000255" key="1"/>
<evidence type="ECO:0000255" key="2">
    <source>
        <dbReference type="PROSITE-ProRule" id="PRU00047"/>
    </source>
</evidence>
<evidence type="ECO:0000256" key="3">
    <source>
        <dbReference type="SAM" id="MobiDB-lite"/>
    </source>
</evidence>
<evidence type="ECO:0000269" key="4">
    <source>
    </source>
</evidence>
<evidence type="ECO:0000269" key="5">
    <source>
    </source>
</evidence>
<evidence type="ECO:0000269" key="6">
    <source>
    </source>
</evidence>
<evidence type="ECO:0000269" key="7">
    <source>
    </source>
</evidence>
<evidence type="ECO:0000269" key="8">
    <source>
    </source>
</evidence>
<evidence type="ECO:0000269" key="9">
    <source>
    </source>
</evidence>
<evidence type="ECO:0000269" key="10">
    <source>
    </source>
</evidence>
<evidence type="ECO:0000269" key="11">
    <source>
    </source>
</evidence>
<evidence type="ECO:0000269" key="12">
    <source>
    </source>
</evidence>
<evidence type="ECO:0000269" key="13">
    <source>
    </source>
</evidence>
<evidence type="ECO:0000305" key="14"/>
<evidence type="ECO:0000305" key="15">
    <source>
    </source>
</evidence>
<evidence type="ECO:0007829" key="16">
    <source>
        <dbReference type="PDB" id="1QRJ"/>
    </source>
</evidence>
<organismHost>
    <name type="scientific">Homo sapiens</name>
    <name type="common">Human</name>
    <dbReference type="NCBI Taxonomy" id="9606"/>
</organismHost>
<reference key="1">
    <citation type="journal article" date="1983" name="Proc. Natl. Acad. Sci. U.S.A.">
        <title>Human adult T-cell leukemia virus: complete nucleotide sequence of the provirus genome integrated in leukemia cell DNA.</title>
        <authorList>
            <person name="Seiki M."/>
            <person name="Hattori S."/>
            <person name="Hirayama Y."/>
            <person name="Yoshida M.C."/>
        </authorList>
    </citation>
    <scope>NUCLEOTIDE SEQUENCE [GENOMIC DNA]</scope>
</reference>
<reference key="2">
    <citation type="journal article" date="1986" name="Biochem. Biophys. Res. Commun.">
        <title>Identification of a protease gene of human T-cell leukemia virus type I (HTLV-I) and its structural comparison.</title>
        <authorList>
            <person name="Nam S.H."/>
            <person name="Hatanaka M."/>
        </authorList>
    </citation>
    <scope>NUCLEOTIDE SEQUENCE [GENOMIC RNA] OF 395-429</scope>
</reference>
<reference key="3">
    <citation type="journal article" date="1982" name="Proc. Natl. Acad. Sci. U.S.A.">
        <title>Primary structure analysis of the major internal protein p24 of human type C T-cell leukemia virus.</title>
        <authorList>
            <person name="Oroszlan S."/>
            <person name="Sarngadharan M.G."/>
            <person name="Copeland T.D."/>
            <person name="Kalyanaraman V.S."/>
            <person name="Gilden R.V."/>
            <person name="Gallo R.C."/>
        </authorList>
    </citation>
    <scope>PROTEIN SEQUENCE OF 131-155</scope>
    <scope>PROTEOLYTIC CLEAVAGE (GAG POLYPROTEIN)</scope>
</reference>
<reference key="4">
    <citation type="journal article" date="1983" name="FEBS Lett.">
        <title>Complete amino acid sequence of human T-cell leukemia virus structural protein p15.</title>
        <authorList>
            <person name="Copeland T.D."/>
            <person name="Oroszlan S."/>
            <person name="Kalyanaraman V.S."/>
            <person name="Sarngadharan M.G."/>
            <person name="Gallo R.C."/>
        </authorList>
    </citation>
    <scope>PROTEIN SEQUENCE OF 345-429</scope>
</reference>
<reference key="5">
    <citation type="journal article" date="1988" name="J. Virol.">
        <title>Processing of gag precursor polyprotein of human T-cell leukemia virus type I by virus-encoded protease.</title>
        <authorList>
            <person name="Nam S.H."/>
            <person name="Kidokoro M."/>
            <person name="Shida H."/>
            <person name="Hatanaka M."/>
        </authorList>
    </citation>
    <scope>PROTEOLYTIC CLEAVAGE (GAG POLYPROTEIN)</scope>
</reference>
<reference key="6">
    <citation type="journal article" date="1992" name="Gene">
        <title>Myristoylation-dependent membrane targeting and release of the HTLV-I Gag precursor, Pr53gag, in yeast.</title>
        <authorList>
            <person name="Hayakawa T."/>
            <person name="Miyazaki T."/>
            <person name="Misumi Y."/>
            <person name="Kobayashi M."/>
            <person name="Fujisawa Y."/>
        </authorList>
    </citation>
    <scope>MYRISTOYLATION AT GLY-2</scope>
</reference>
<reference key="7">
    <citation type="journal article" date="1993" name="J. Virol.">
        <title>Characterization of ribosomal frameshifting for expression of pol gene products of human T-cell leukemia virus type I.</title>
        <authorList>
            <person name="Nam S.H."/>
            <person name="Copeland T.D."/>
            <person name="Hatanaka M."/>
            <person name="Oroszlan S."/>
        </authorList>
    </citation>
    <scope>RIBOSOMAL FRAMESHIFT</scope>
</reference>
<reference key="8">
    <citation type="journal article" date="2001" name="J. Virol.">
        <title>The NH2-terminal domain of the human T-cell leukemia virus type 1 capsid protein is involved in particle formation.</title>
        <authorList>
            <person name="Rayne F."/>
            <person name="Bouamr F."/>
            <person name="Lalanne J."/>
            <person name="Mamoun R.Z."/>
        </authorList>
    </citation>
    <scope>DOMAIN (CAPSID PROTEIN P24)</scope>
    <scope>MUTAGENESIS OF GLY-2</scope>
    <scope>MYRISTOYLATION AT GLY-2</scope>
</reference>
<reference key="9">
    <citation type="journal article" date="2003" name="J. Virol.">
        <title>PPPYVEPTAP motif is the late domain of human T-cell leukemia virus type 1 Gag and mediates its functional interaction with cellular proteins Nedd4 and Tsg101.</title>
        <authorList>
            <person name="Bouamr F."/>
            <person name="Melillo J.A."/>
            <person name="Wang M.Q."/>
            <person name="Nagashima K."/>
            <person name="de Los Santos M."/>
            <person name="Rein A."/>
            <person name="Goff S.P."/>
        </authorList>
    </citation>
    <scope>DOMAIN LATE-BUDDING (GAG POLYPROTEIN)</scope>
    <scope>INTERACTION WITH HOST TSG101 (GAG POLYPROTEIN)</scope>
    <scope>INTERACTION WITH HOST NEDD4 (GAG POLYPROTEIN)</scope>
    <scope>MUTAGENESIS OF 118-PRO--PRO-120 AND 124-PRO--PRO-127</scope>
</reference>
<reference key="10">
    <citation type="journal article" date="2004" name="J. Cell Sci.">
        <title>Nedd4.1-mediated ubiquitination and subsequent recruitment of Tsg101 ensure HTLV-1 Gag trafficking towards the multivesicular body pathway prior to virus budding.</title>
        <authorList>
            <person name="Blot V."/>
            <person name="Perugi F."/>
            <person name="Gay B."/>
            <person name="Prevost M.C."/>
            <person name="Briant L."/>
            <person name="Tangy F."/>
            <person name="Abriel H."/>
            <person name="Staub O."/>
            <person name="Dokhelar M.C."/>
            <person name="Pique C."/>
        </authorList>
    </citation>
    <scope>DOMAIN LATE-BUDDING (GAG POLYPROTEIN)</scope>
    <scope>INTERACTION WITH HOST NEDD4 (GAG POLYPROTEIN)</scope>
    <scope>INTERACTION WITH HOST TSG101 (GAG POLYPROTEIN)</scope>
</reference>
<reference key="11">
    <citation type="journal article" date="2004" name="J. Mol. Biol.">
        <title>In vivo homodimerisation of HTLV-1 Gag and MA gives clues to the retroviral capsid and TM envelope protein arrangement.</title>
        <authorList>
            <person name="Rayne F."/>
            <person name="Kajava A.V."/>
            <person name="Lalanne J."/>
            <person name="Mamoun R.Z."/>
        </authorList>
    </citation>
    <scope>DISULFIDE BOND</scope>
    <scope>SUBUNIT (GAG POLYPROTEIN)</scope>
    <scope>SUBUNIT (MATRIX PROTEIN P19)</scope>
    <scope>MUTAGENESIS OF CYS-61</scope>
    <scope>SUBCELLULAR LOCATION (MATRIX PROTEIN P19)</scope>
    <scope>FUNCTION (GAG POLYPROTEIN)</scope>
    <scope>FUNCTION (MATRIX PROTEIN P19)</scope>
</reference>
<reference key="12">
    <citation type="journal article" date="2006" name="Virology">
        <title>Phosphorylation of the HTLV-1 matrix L-domain-containing protein by virus-associated ERK-2 kinase.</title>
        <authorList>
            <person name="Hemonnot B."/>
            <person name="Molle D."/>
            <person name="Bardy M."/>
            <person name="Gay B."/>
            <person name="Laune D."/>
            <person name="Devaux C."/>
            <person name="Briant L."/>
        </authorList>
    </citation>
    <scope>PHOSPHORYLATION AT SER-105 BY MAPK1</scope>
    <scope>MUTAGENESIS OF SER-105</scope>
</reference>
<reference key="13">
    <citation type="journal article" date="2015" name="Biochem. Biophys. Res. Commun.">
        <title>Bovine leukemia virus nucleocapsid protein is an efficient nucleic acid chaperone.</title>
        <authorList>
            <person name="Qualley D.F."/>
            <person name="Sokolove V.L."/>
            <person name="Ross J.L."/>
        </authorList>
    </citation>
    <scope>FUNCTION (NUCLEOCAPSID PROTEIN P15-GAG)</scope>
    <scope>DOMAIN (NUCLEOCAPSID PROTEIN P15-GAG)</scope>
</reference>
<reference key="14">
    <citation type="journal article" date="1999" name="J. Biomol. NMR">
        <title>Sequence-specific 1H, 13C and 15N chemical shift assignment and secondary structure of the HTLV-I capsid protein.</title>
        <authorList>
            <person name="Khorasanizadeh S."/>
            <person name="Campos-Olivas R."/>
            <person name="Clark C.A."/>
            <person name="Summers M.F."/>
        </authorList>
    </citation>
    <scope>STRUCTURE BY NMR OF 146-344</scope>
</reference>
<organism>
    <name type="scientific">Human T-cell leukemia virus 1 (strain Japan ATK-1 subtype A)</name>
    <name type="common">HTLV-1</name>
    <dbReference type="NCBI Taxonomy" id="11926"/>
    <lineage>
        <taxon>Viruses</taxon>
        <taxon>Riboviria</taxon>
        <taxon>Pararnavirae</taxon>
        <taxon>Artverviricota</taxon>
        <taxon>Revtraviricetes</taxon>
        <taxon>Ortervirales</taxon>
        <taxon>Retroviridae</taxon>
        <taxon>Orthoretrovirinae</taxon>
        <taxon>Deltaretrovirus</taxon>
        <taxon>Primate T-lymphotropic virus 1</taxon>
    </lineage>
</organism>
<sequence length="429" mass="47496">MGQIFSRSASPIPRPPRGLAAHHWLNFLQAAYRLEPGPSSYDFHQLKKFLKIALETPARICPINYSLLASLLPKGYPGRVNEILHILIQTQAQIPSRPAPPPPSSPTHDPPDSDPQIPPPYVEPTAPQVLPVMHPHGAPPNHRPWQMKDLQAIKQEVSQAAPGSPQFMQTIRLAVQQFDPTAKDLQDLLQYLCSSLVASLHHQQLDSLISEAETRGITGYNPLAGPLRVQANNPQQQGLRREYQQLWLAAFAALPGSAKDPSWASILQGLEEPYHAFVERLNIALDNGLPEGTPKDPILRSLAYSNANKECQKLLQARGHTNSPLGDMLRACQTWTPKDKTKVLVVQPKKPPPNQPCFRCGKAGHWSRDCTQPRPPPGPCPLCQDPTHWKRDCPRLKPTIPEPEPEEDALLLDLPADIPHPKNSIGGEV</sequence>
<keyword id="KW-0002">3D-structure</keyword>
<keyword id="KW-0167">Capsid protein</keyword>
<keyword id="KW-0903">Direct protein sequencing</keyword>
<keyword id="KW-1015">Disulfide bond</keyword>
<keyword id="KW-0945">Host-virus interaction</keyword>
<keyword id="KW-0449">Lipoprotein</keyword>
<keyword id="KW-0479">Metal-binding</keyword>
<keyword id="KW-0519">Myristate</keyword>
<keyword id="KW-0597">Phosphoprotein</keyword>
<keyword id="KW-1185">Reference proteome</keyword>
<keyword id="KW-0677">Repeat</keyword>
<keyword id="KW-0688">Ribosomal frameshifting</keyword>
<keyword id="KW-0832">Ubl conjugation</keyword>
<keyword id="KW-0543">Viral nucleoprotein</keyword>
<keyword id="KW-0946">Virion</keyword>
<keyword id="KW-0862">Zinc</keyword>
<keyword id="KW-0863">Zinc-finger</keyword>
<feature type="initiator methionine" description="Removed; by host" evidence="1">
    <location>
        <position position="1"/>
    </location>
</feature>
<feature type="chain" id="PRO_0000259771" description="Gag polyprotein">
    <location>
        <begin position="2"/>
        <end position="429"/>
    </location>
</feature>
<feature type="chain" id="PRO_0000038811" description="Matrix protein p19">
    <location>
        <begin position="2"/>
        <end position="130"/>
    </location>
</feature>
<feature type="chain" id="PRO_0000038812" description="Capsid protein p24">
    <location>
        <begin position="131"/>
        <end position="344"/>
    </location>
</feature>
<feature type="chain" id="PRO_0000038813" description="Nucleocapsid protein p15-gag">
    <location>
        <begin position="345"/>
        <end position="429"/>
    </location>
</feature>
<feature type="zinc finger region" description="CCHC-type 1" evidence="2">
    <location>
        <begin position="355"/>
        <end position="372"/>
    </location>
</feature>
<feature type="zinc finger region" description="CCHC-type 2" evidence="2">
    <location>
        <begin position="378"/>
        <end position="395"/>
    </location>
</feature>
<feature type="region of interest" description="Disordered" evidence="3">
    <location>
        <begin position="93"/>
        <end position="144"/>
    </location>
</feature>
<feature type="short sequence motif" description="PPXY motif" evidence="7">
    <location>
        <begin position="118"/>
        <end position="121"/>
    </location>
</feature>
<feature type="short sequence motif" description="PTAP/PSAP motif" evidence="7">
    <location>
        <begin position="124"/>
        <end position="127"/>
    </location>
</feature>
<feature type="site" description="Cleavage; by viral protease" evidence="15">
    <location>
        <begin position="130"/>
        <end position="131"/>
    </location>
</feature>
<feature type="site" description="Cleavage; by viral protease" evidence="15">
    <location>
        <begin position="344"/>
        <end position="345"/>
    </location>
</feature>
<feature type="modified residue" description="Phosphoserine; by host MAPK1" evidence="9">
    <location>
        <position position="105"/>
    </location>
</feature>
<feature type="lipid moiety-binding region" description="N-myristoyl glycine; by host" evidence="1 4 5">
    <location>
        <position position="2"/>
    </location>
</feature>
<feature type="disulfide bond" description="Interchain" evidence="8">
    <location>
        <position position="61"/>
    </location>
</feature>
<feature type="mutagenesis site" description="Complete loss of myristoylation the polyprotein. The concomitent loss of binding to the host cell membrane impairs the formation of viral particles." evidence="4">
    <original>G</original>
    <variation>A</variation>
    <location>
        <position position="2"/>
    </location>
</feature>
<feature type="mutagenesis site" description="Complete loss of homodimerization of matrix protein p19." evidence="8">
    <original>C</original>
    <variation>S</variation>
    <location>
        <position position="61"/>
    </location>
</feature>
<feature type="mutagenesis site" description="70% loss of viral particle release." evidence="9">
    <original>S</original>
    <variation>A</variation>
    <location>
        <position position="105"/>
    </location>
</feature>
<feature type="mutagenesis site" description="Complete loss of interaction with human NEDD4." evidence="6">
    <original>PPP</original>
    <variation>AAA</variation>
    <location>
        <begin position="118"/>
        <end position="120"/>
    </location>
</feature>
<feature type="mutagenesis site" description="Complete loss of interaction with human TSG101." evidence="6">
    <original>PTAP</original>
    <variation>ATAA</variation>
    <location>
        <begin position="124"/>
        <end position="127"/>
    </location>
</feature>
<feature type="sequence conflict" description="In Ref. 4; AA sequence." evidence="14" ref="4">
    <original>A</original>
    <variation>T</variation>
    <location>
        <position position="416"/>
    </location>
</feature>
<feature type="sequence conflict" description="In Ref. 1; AAA96672." evidence="14" ref="1">
    <original>S</original>
    <variation>F</variation>
    <location>
        <position position="424"/>
    </location>
</feature>
<feature type="helix" evidence="16">
    <location>
        <begin position="147"/>
        <end position="159"/>
    </location>
</feature>
<feature type="helix" evidence="16">
    <location>
        <begin position="167"/>
        <end position="177"/>
    </location>
</feature>
<feature type="helix" evidence="16">
    <location>
        <begin position="182"/>
        <end position="189"/>
    </location>
</feature>
<feature type="turn" evidence="16">
    <location>
        <begin position="190"/>
        <end position="192"/>
    </location>
</feature>
<feature type="helix" evidence="16">
    <location>
        <begin position="195"/>
        <end position="214"/>
    </location>
</feature>
<feature type="turn" evidence="16">
    <location>
        <begin position="215"/>
        <end position="219"/>
    </location>
</feature>
<feature type="turn" evidence="16">
    <location>
        <begin position="222"/>
        <end position="224"/>
    </location>
</feature>
<feature type="helix" evidence="16">
    <location>
        <begin position="228"/>
        <end position="231"/>
    </location>
</feature>
<feature type="helix" evidence="16">
    <location>
        <begin position="238"/>
        <end position="251"/>
    </location>
</feature>
<feature type="helix" evidence="16">
    <location>
        <begin position="263"/>
        <end position="265"/>
    </location>
</feature>
<feature type="helix" evidence="16">
    <location>
        <begin position="274"/>
        <end position="286"/>
    </location>
</feature>
<feature type="helix" evidence="16">
    <location>
        <begin position="296"/>
        <end position="303"/>
    </location>
</feature>
<feature type="turn" evidence="16">
    <location>
        <begin position="304"/>
        <end position="306"/>
    </location>
</feature>
<feature type="helix" evidence="16">
    <location>
        <begin position="309"/>
        <end position="318"/>
    </location>
</feature>
<feature type="strand" evidence="16">
    <location>
        <begin position="321"/>
        <end position="323"/>
    </location>
</feature>
<feature type="helix" evidence="16">
    <location>
        <begin position="325"/>
        <end position="332"/>
    </location>
</feature>
<dbReference type="EMBL" id="J02029">
    <property type="protein sequence ID" value="AAA96672.1"/>
    <property type="molecule type" value="Genomic_DNA"/>
</dbReference>
<dbReference type="EMBL" id="M13810">
    <property type="protein sequence ID" value="AAA46205.1"/>
    <property type="molecule type" value="Genomic_RNA"/>
</dbReference>
<dbReference type="PIR" id="B93954">
    <property type="entry name" value="FOLJGH"/>
</dbReference>
<dbReference type="PDB" id="1QRJ">
    <property type="method" value="NMR"/>
    <property type="chains" value="A=146-344"/>
</dbReference>
<dbReference type="PDB" id="8PUG">
    <property type="method" value="EM"/>
    <property type="resolution" value="5.90 A"/>
    <property type="chains" value="A/B/C=1-429"/>
</dbReference>
<dbReference type="PDB" id="8PUH">
    <property type="method" value="EM"/>
    <property type="resolution" value="6.20 A"/>
    <property type="chains" value="A/B=1-429"/>
</dbReference>
<dbReference type="PDBsum" id="1QRJ"/>
<dbReference type="PDBsum" id="8PUG"/>
<dbReference type="PDBsum" id="8PUH"/>
<dbReference type="BMRB" id="P03345"/>
<dbReference type="EMDB" id="EMD-17942"/>
<dbReference type="EMDB" id="EMD-17943"/>
<dbReference type="SMR" id="P03345"/>
<dbReference type="ELM" id="P03345"/>
<dbReference type="iPTMnet" id="P03345"/>
<dbReference type="EvolutionaryTrace" id="P03345"/>
<dbReference type="Proteomes" id="UP000007683">
    <property type="component" value="Segment"/>
</dbReference>
<dbReference type="GO" id="GO:0019013">
    <property type="term" value="C:viral nucleocapsid"/>
    <property type="evidence" value="ECO:0007669"/>
    <property type="project" value="UniProtKB-KW"/>
</dbReference>
<dbReference type="GO" id="GO:0003676">
    <property type="term" value="F:nucleic acid binding"/>
    <property type="evidence" value="ECO:0007669"/>
    <property type="project" value="InterPro"/>
</dbReference>
<dbReference type="GO" id="GO:0005198">
    <property type="term" value="F:structural molecule activity"/>
    <property type="evidence" value="ECO:0007669"/>
    <property type="project" value="InterPro"/>
</dbReference>
<dbReference type="GO" id="GO:0008270">
    <property type="term" value="F:zinc ion binding"/>
    <property type="evidence" value="ECO:0007669"/>
    <property type="project" value="UniProtKB-KW"/>
</dbReference>
<dbReference type="GO" id="GO:0075523">
    <property type="term" value="P:viral translational frameshifting"/>
    <property type="evidence" value="ECO:0007669"/>
    <property type="project" value="UniProtKB-KW"/>
</dbReference>
<dbReference type="FunFam" id="1.10.185.10:FF:000001">
    <property type="entry name" value="Gag polyprotein"/>
    <property type="match status" value="1"/>
</dbReference>
<dbReference type="Gene3D" id="1.10.1200.30">
    <property type="match status" value="1"/>
</dbReference>
<dbReference type="Gene3D" id="1.10.185.10">
    <property type="entry name" value="Delta-retroviral matrix"/>
    <property type="match status" value="1"/>
</dbReference>
<dbReference type="Gene3D" id="1.10.375.10">
    <property type="entry name" value="Human Immunodeficiency Virus Type 1 Capsid Protein"/>
    <property type="match status" value="1"/>
</dbReference>
<dbReference type="Gene3D" id="4.10.60.10">
    <property type="entry name" value="Zinc finger, CCHC-type"/>
    <property type="match status" value="1"/>
</dbReference>
<dbReference type="InterPro" id="IPR003139">
    <property type="entry name" value="D_retro_matrix"/>
</dbReference>
<dbReference type="InterPro" id="IPR045345">
    <property type="entry name" value="Gag_p24_C"/>
</dbReference>
<dbReference type="InterPro" id="IPR050195">
    <property type="entry name" value="Primate_lentivir_Gag_pol-like"/>
</dbReference>
<dbReference type="InterPro" id="IPR008916">
    <property type="entry name" value="Retrov_capsid_C"/>
</dbReference>
<dbReference type="InterPro" id="IPR008919">
    <property type="entry name" value="Retrov_capsid_N"/>
</dbReference>
<dbReference type="InterPro" id="IPR010999">
    <property type="entry name" value="Retrovr_matrix"/>
</dbReference>
<dbReference type="InterPro" id="IPR001878">
    <property type="entry name" value="Znf_CCHC"/>
</dbReference>
<dbReference type="InterPro" id="IPR036875">
    <property type="entry name" value="Znf_CCHC_sf"/>
</dbReference>
<dbReference type="PANTHER" id="PTHR40389">
    <property type="entry name" value="ENDOGENOUS RETROVIRUS GROUP K MEMBER 24 GAG POLYPROTEIN-RELATED"/>
    <property type="match status" value="1"/>
</dbReference>
<dbReference type="PANTHER" id="PTHR40389:SF3">
    <property type="entry name" value="IGE-BINDING PROTEIN"/>
    <property type="match status" value="1"/>
</dbReference>
<dbReference type="Pfam" id="PF02228">
    <property type="entry name" value="Gag_p19"/>
    <property type="match status" value="1"/>
</dbReference>
<dbReference type="Pfam" id="PF00607">
    <property type="entry name" value="Gag_p24"/>
    <property type="match status" value="1"/>
</dbReference>
<dbReference type="Pfam" id="PF19317">
    <property type="entry name" value="Gag_p24_C"/>
    <property type="match status" value="1"/>
</dbReference>
<dbReference type="Pfam" id="PF00098">
    <property type="entry name" value="zf-CCHC"/>
    <property type="match status" value="1"/>
</dbReference>
<dbReference type="SMART" id="SM00343">
    <property type="entry name" value="ZnF_C2HC"/>
    <property type="match status" value="2"/>
</dbReference>
<dbReference type="SUPFAM" id="SSF47836">
    <property type="entry name" value="Retroviral matrix proteins"/>
    <property type="match status" value="1"/>
</dbReference>
<dbReference type="SUPFAM" id="SSF47353">
    <property type="entry name" value="Retrovirus capsid dimerization domain-like"/>
    <property type="match status" value="1"/>
</dbReference>
<dbReference type="SUPFAM" id="SSF47943">
    <property type="entry name" value="Retrovirus capsid protein, N-terminal core domain"/>
    <property type="match status" value="1"/>
</dbReference>
<dbReference type="SUPFAM" id="SSF57756">
    <property type="entry name" value="Retrovirus zinc finger-like domains"/>
    <property type="match status" value="1"/>
</dbReference>
<dbReference type="PROSITE" id="PS50158">
    <property type="entry name" value="ZF_CCHC"/>
    <property type="match status" value="1"/>
</dbReference>
<comment type="function">
    <molecule>Gag polyprotein</molecule>
    <text evidence="8">The matrix domain targets Gag, Gag-Pro and Gag-Pro-Pol polyproteins to the plasma membrane via a multipartite membrane binding signal, that includes its myristoylated N-terminus.</text>
</comment>
<comment type="function">
    <molecule>Matrix protein p19</molecule>
    <text evidence="8">Matrix protein.</text>
</comment>
<comment type="function">
    <molecule>Capsid protein p24</molecule>
    <text evidence="14">Forms the spherical core of the virus that encapsulates the genomic RNA-nucleocapsid complex.</text>
</comment>
<comment type="function">
    <molecule>Nucleocapsid protein p15-gag</molecule>
    <text evidence="10">Binds strongly to viral nucleic acids and promote their aggregation. Also destabilizes the nucleic acids duplexes via highly structured zinc-binding motifs.</text>
</comment>
<comment type="subunit">
    <molecule>Gag polyprotein</molecule>
    <text evidence="6 8">Homodimer; the homodimers are part of the immature particles (PubMed:15476809). Interacts with human TSG101 and NEDD4; these interactions are essential for budding and release of viral particles (PubMed:14581525, PubMed:15126635).</text>
</comment>
<comment type="subunit">
    <molecule>Matrix protein p19</molecule>
    <text evidence="8">Homodimer; further assembles as homohexamers (PubMed:15476809).</text>
</comment>
<comment type="subcellular location">
    <molecule>Matrix protein p19</molecule>
    <subcellularLocation>
        <location evidence="8">Virion</location>
    </subcellularLocation>
</comment>
<comment type="subcellular location">
    <molecule>Capsid protein p24</molecule>
    <subcellularLocation>
        <location evidence="14">Virion</location>
    </subcellularLocation>
</comment>
<comment type="subcellular location">
    <molecule>Nucleocapsid protein p15-gag</molecule>
    <subcellularLocation>
        <location evidence="14">Virion</location>
    </subcellularLocation>
</comment>
<comment type="alternative products">
    <event type="ribosomal frameshifting"/>
    <isoform>
        <id>P03345-1</id>
        <name>Gag polyprotein</name>
        <sequence type="displayed"/>
    </isoform>
    <isoform>
        <id>P10274-1</id>
        <name>Gag-Pro polyprotein</name>
        <sequence type="external"/>
    </isoform>
    <isoform>
        <id>P03362-1</id>
        <name>Gag-Pro-Pol polyprotein</name>
        <sequence type="external"/>
    </isoform>
    <text evidence="14">This strategy of translation probably allows the virus to modulate the quantity of each viral protein.</text>
</comment>
<comment type="domain">
    <molecule>Gag polyprotein</molecule>
    <text evidence="6 7">Late-budding domains (L domains) are short sequence motifs essential for viral particle release. They can occur individually or in close proximity within structural proteins. They interacts with sorting cellular proteins of the multivesicular body (MVB) pathway. Most of these proteins are class E vacuolar protein sorting factors belonging to ESCRT-I, ESCRT-II or ESCRT-III complexes. Matrix protein p19 contains two L domains: a PTAP/PSAP motif which interacts with the UEV domain of TSG101, and a PPXY motif which binds to the WW domains of the ubiquitin ligase NEDD4.</text>
</comment>
<comment type="domain">
    <molecule>Capsid protein p24</molecule>
    <text evidence="4">The capsid protein N-terminus seems to be involved in Gag-Gag interactions.</text>
</comment>
<comment type="domain">
    <molecule>Nucleocapsid protein p15-gag</molecule>
    <text evidence="10">The C-terminus is acidic.</text>
</comment>
<comment type="PTM">
    <molecule>Gag polyprotein</molecule>
    <text evidence="11 12">Specific enzymatic cleavages by the viral protease yield mature proteins. The polyprotein is cleaved during and after budding, this process is termed maturation.</text>
</comment>
<comment type="PTM">
    <molecule>Matrix protein p19</molecule>
    <text evidence="9">Phosphorylation of the matrix protein p19 by MAPK1 seems to play a role in budding.</text>
</comment>
<comment type="PTM">
    <molecule>Gag polyprotein</molecule>
    <text evidence="7">Ubiquitinated by host NEDD4.</text>
</comment>
<comment type="PTM">
    <molecule>Gag polyprotein</molecule>
    <text evidence="4 5">Myristoylated. Myristoylation of the matrix (MA) domain mediates the transport and binding of Gag polyproteins to the host plasma membrane and is required for the assembly of viral particles.</text>
</comment>
<comment type="miscellaneous">
    <text evidence="14">HTLV-1 lineages are divided in four clades, A (Cosmopolitan), B (Central African group), C (Melanesian group) and D (New Central African group).</text>
</comment>
<comment type="miscellaneous">
    <molecule>Isoform Gag polyprotein</molecule>
    <text evidence="13">Produced by conventional translation.</text>
</comment>
<protein>
    <recommendedName>
        <fullName>Gag polyprotein</fullName>
    </recommendedName>
    <alternativeName>
        <fullName>Pr53Gag</fullName>
    </alternativeName>
    <component>
        <recommendedName>
            <fullName>Matrix protein p19</fullName>
            <shortName>MA</shortName>
        </recommendedName>
    </component>
    <component>
        <recommendedName>
            <fullName>Capsid protein p24</fullName>
            <shortName>CA</shortName>
        </recommendedName>
    </component>
    <component>
        <recommendedName>
            <fullName>Nucleocapsid protein p15-gag</fullName>
            <shortName>NC-gag</shortName>
        </recommendedName>
    </component>
</protein>
<gene>
    <name type="primary">gag</name>
</gene>
<proteinExistence type="evidence at protein level"/>
<name>GAG_HTL1A</name>